<organism>
    <name type="scientific">Archaeoglobus fulgidus (strain ATCC 49558 / DSM 4304 / JCM 9628 / NBRC 100126 / VC-16)</name>
    <dbReference type="NCBI Taxonomy" id="224325"/>
    <lineage>
        <taxon>Archaea</taxon>
        <taxon>Methanobacteriati</taxon>
        <taxon>Methanobacteriota</taxon>
        <taxon>Archaeoglobi</taxon>
        <taxon>Archaeoglobales</taxon>
        <taxon>Archaeoglobaceae</taxon>
        <taxon>Archaeoglobus</taxon>
    </lineage>
</organism>
<sequence>MKSIRMLMVMLALDDLLKNPYETFRIADELRRELVGDTVTYVVNRNINFTDICINDCKFCSFRNRKKYLLSLDEIKQKVEEAVEFGCTELCIQGGLLPDADLDFYLSILQAVRDVDKKIHIHAFSPMEVVHAARNSGMTVEEVLKELKKEGLGSMPGTAAEILDDSIRALICPRKLKTAEWVEVIKTAHRVGIPTTATIMYGHIDTWEHRINHLLLIKKIQQETGGITELIPLPFMSKNNELGRYAKGSSGFDDLLMIAIARILLYPEIKNIQASWVKMGQKLAQAALHVGANDLGGTLMEENISKSAGATSGEFMHPEELRELIKIAGRVPKQRDTLYNILD</sequence>
<accession>O29460</accession>
<comment type="function">
    <text evidence="1">Catalyzes the radical-mediated synthesis of 5-amino-5-(4-hydroxybenzyl)-6-(D-ribitylimino)-5,6-dihydrouracil from 5-amino-6-(D-ribitylamino)uracil and L-tyrosine.</text>
</comment>
<comment type="catalytic activity">
    <reaction evidence="1">
        <text>5-amino-6-(D-ribitylamino)uracil + L-tyrosine + S-adenosyl-L-methionine = 5-amino-5-(4-hydroxybenzyl)-6-(D-ribitylimino)-5,6-dihydrouracil + 2-iminoacetate + 5'-deoxyadenosine + L-methionine + H(+)</text>
        <dbReference type="Rhea" id="RHEA:55200"/>
        <dbReference type="ChEBI" id="CHEBI:15378"/>
        <dbReference type="ChEBI" id="CHEBI:15934"/>
        <dbReference type="ChEBI" id="CHEBI:17319"/>
        <dbReference type="ChEBI" id="CHEBI:57844"/>
        <dbReference type="ChEBI" id="CHEBI:58315"/>
        <dbReference type="ChEBI" id="CHEBI:59789"/>
        <dbReference type="ChEBI" id="CHEBI:77846"/>
        <dbReference type="ChEBI" id="CHEBI:85936"/>
        <dbReference type="EC" id="2.5.1.147"/>
    </reaction>
</comment>
<comment type="cofactor">
    <cofactor evidence="1">
        <name>[4Fe-4S] cluster</name>
        <dbReference type="ChEBI" id="CHEBI:49883"/>
    </cofactor>
    <text evidence="1">Binds 1 [4Fe-4S] cluster. The cluster is coordinated with 3 cysteines and an exchangeable S-adenosyl-L-methionine.</text>
</comment>
<comment type="pathway">
    <text evidence="1">Cofactor biosynthesis; coenzyme F0 biosynthesis.</text>
</comment>
<comment type="subunit">
    <text evidence="1">Consists of two subunits, CofG and CofH.</text>
</comment>
<comment type="similarity">
    <text evidence="1">Belongs to the radical SAM superfamily. CofH family.</text>
</comment>
<comment type="sequence caution" evidence="3">
    <conflict type="erroneous initiation">
        <sequence resource="EMBL-CDS" id="AAB90440"/>
    </conflict>
</comment>
<name>COFH_ARCFU</name>
<gene>
    <name evidence="1" type="primary">cofH</name>
    <name type="ordered locus">AF_0798</name>
</gene>
<evidence type="ECO:0000255" key="1">
    <source>
        <dbReference type="HAMAP-Rule" id="MF_01612"/>
    </source>
</evidence>
<evidence type="ECO:0000255" key="2">
    <source>
        <dbReference type="PROSITE-ProRule" id="PRU01266"/>
    </source>
</evidence>
<evidence type="ECO:0000305" key="3"/>
<proteinExistence type="inferred from homology"/>
<dbReference type="EC" id="2.5.1.147" evidence="1"/>
<dbReference type="EMBL" id="AE000782">
    <property type="protein sequence ID" value="AAB90440.1"/>
    <property type="status" value="ALT_INIT"/>
    <property type="molecule type" value="Genomic_DNA"/>
</dbReference>
<dbReference type="PIR" id="F69349">
    <property type="entry name" value="F69349"/>
</dbReference>
<dbReference type="SMR" id="O29460"/>
<dbReference type="STRING" id="224325.AF_0798"/>
<dbReference type="PaxDb" id="224325-AF_0798"/>
<dbReference type="DNASU" id="1484016"/>
<dbReference type="EnsemblBacteria" id="AAB90440">
    <property type="protein sequence ID" value="AAB90440"/>
    <property type="gene ID" value="AF_0798"/>
</dbReference>
<dbReference type="KEGG" id="afu:AF_0798"/>
<dbReference type="eggNOG" id="arCOG00656">
    <property type="taxonomic scope" value="Archaea"/>
</dbReference>
<dbReference type="HOGENOM" id="CLU_040406_1_0_2"/>
<dbReference type="PhylomeDB" id="O29460"/>
<dbReference type="UniPathway" id="UPA00072"/>
<dbReference type="Proteomes" id="UP000002199">
    <property type="component" value="Chromosome"/>
</dbReference>
<dbReference type="GO" id="GO:0051539">
    <property type="term" value="F:4 iron, 4 sulfur cluster binding"/>
    <property type="evidence" value="ECO:0007669"/>
    <property type="project" value="UniProtKB-KW"/>
</dbReference>
<dbReference type="GO" id="GO:0141093">
    <property type="term" value="F:5-amino-6-(D-ribitylamino)uracil--L-tyrosine 4-hydroxyphenyl transferase activity"/>
    <property type="evidence" value="ECO:0007669"/>
    <property type="project" value="UniProtKB-EC"/>
</dbReference>
<dbReference type="GO" id="GO:0044689">
    <property type="term" value="F:7,8-didemethyl-8-hydroxy-5-deazariboflavin synthase activity"/>
    <property type="evidence" value="ECO:0007669"/>
    <property type="project" value="TreeGrafter"/>
</dbReference>
<dbReference type="GO" id="GO:0005506">
    <property type="term" value="F:iron ion binding"/>
    <property type="evidence" value="ECO:0007669"/>
    <property type="project" value="UniProtKB-UniRule"/>
</dbReference>
<dbReference type="CDD" id="cd01335">
    <property type="entry name" value="Radical_SAM"/>
    <property type="match status" value="1"/>
</dbReference>
<dbReference type="Gene3D" id="3.20.20.70">
    <property type="entry name" value="Aldolase class I"/>
    <property type="match status" value="1"/>
</dbReference>
<dbReference type="HAMAP" id="MF_01612">
    <property type="entry name" value="FO_synth_sub2"/>
    <property type="match status" value="1"/>
</dbReference>
<dbReference type="InterPro" id="IPR013785">
    <property type="entry name" value="Aldolase_TIM"/>
</dbReference>
<dbReference type="InterPro" id="IPR045567">
    <property type="entry name" value="CofH/MnqC-like_C"/>
</dbReference>
<dbReference type="InterPro" id="IPR019940">
    <property type="entry name" value="CofH_family"/>
</dbReference>
<dbReference type="InterPro" id="IPR006638">
    <property type="entry name" value="Elp3/MiaA/NifB-like_rSAM"/>
</dbReference>
<dbReference type="InterPro" id="IPR034405">
    <property type="entry name" value="F420"/>
</dbReference>
<dbReference type="InterPro" id="IPR020050">
    <property type="entry name" value="FO_synthase_su2"/>
</dbReference>
<dbReference type="InterPro" id="IPR007197">
    <property type="entry name" value="rSAM"/>
</dbReference>
<dbReference type="NCBIfam" id="TIGR00423">
    <property type="entry name" value="CofH family radical SAM protein"/>
    <property type="match status" value="1"/>
</dbReference>
<dbReference type="NCBIfam" id="TIGR03551">
    <property type="entry name" value="F420_cofH"/>
    <property type="match status" value="1"/>
</dbReference>
<dbReference type="NCBIfam" id="NF005609">
    <property type="entry name" value="PRK07360.1"/>
    <property type="match status" value="1"/>
</dbReference>
<dbReference type="PANTHER" id="PTHR43076">
    <property type="entry name" value="FO SYNTHASE (COFH)"/>
    <property type="match status" value="1"/>
</dbReference>
<dbReference type="PANTHER" id="PTHR43076:SF1">
    <property type="entry name" value="LIPOYL SYNTHASE 2"/>
    <property type="match status" value="1"/>
</dbReference>
<dbReference type="Pfam" id="PF19288">
    <property type="entry name" value="CofH_C"/>
    <property type="match status" value="1"/>
</dbReference>
<dbReference type="Pfam" id="PF04055">
    <property type="entry name" value="Radical_SAM"/>
    <property type="match status" value="1"/>
</dbReference>
<dbReference type="PIRSF" id="PIRSF004762">
    <property type="entry name" value="CHP00423"/>
    <property type="match status" value="1"/>
</dbReference>
<dbReference type="SFLD" id="SFLDF00293">
    <property type="entry name" value="((2_3_4_5-tetrahydroxypentyl)a"/>
    <property type="match status" value="1"/>
</dbReference>
<dbReference type="SFLD" id="SFLDF00343">
    <property type="entry name" value="aminofutalosine_synthase_(mqnE"/>
    <property type="match status" value="1"/>
</dbReference>
<dbReference type="SFLD" id="SFLDF00342">
    <property type="entry name" value="cyclic_dehypoxanthine_futalosi"/>
    <property type="match status" value="1"/>
</dbReference>
<dbReference type="SFLD" id="SFLDG01064">
    <property type="entry name" value="F420__menaquinone_cofactor_bio"/>
    <property type="match status" value="1"/>
</dbReference>
<dbReference type="SMART" id="SM00729">
    <property type="entry name" value="Elp3"/>
    <property type="match status" value="1"/>
</dbReference>
<dbReference type="SUPFAM" id="SSF102114">
    <property type="entry name" value="Radical SAM enzymes"/>
    <property type="match status" value="1"/>
</dbReference>
<dbReference type="PROSITE" id="PS51918">
    <property type="entry name" value="RADICAL_SAM"/>
    <property type="match status" value="1"/>
</dbReference>
<keyword id="KW-0004">4Fe-4S</keyword>
<keyword id="KW-0408">Iron</keyword>
<keyword id="KW-0411">Iron-sulfur</keyword>
<keyword id="KW-0479">Metal-binding</keyword>
<keyword id="KW-1185">Reference proteome</keyword>
<keyword id="KW-0949">S-adenosyl-L-methionine</keyword>
<keyword id="KW-0808">Transferase</keyword>
<reference key="1">
    <citation type="journal article" date="1997" name="Nature">
        <title>The complete genome sequence of the hyperthermophilic, sulphate-reducing archaeon Archaeoglobus fulgidus.</title>
        <authorList>
            <person name="Klenk H.-P."/>
            <person name="Clayton R.A."/>
            <person name="Tomb J.-F."/>
            <person name="White O."/>
            <person name="Nelson K.E."/>
            <person name="Ketchum K.A."/>
            <person name="Dodson R.J."/>
            <person name="Gwinn M.L."/>
            <person name="Hickey E.K."/>
            <person name="Peterson J.D."/>
            <person name="Richardson D.L."/>
            <person name="Kerlavage A.R."/>
            <person name="Graham D.E."/>
            <person name="Kyrpides N.C."/>
            <person name="Fleischmann R.D."/>
            <person name="Quackenbush J."/>
            <person name="Lee N.H."/>
            <person name="Sutton G.G."/>
            <person name="Gill S.R."/>
            <person name="Kirkness E.F."/>
            <person name="Dougherty B.A."/>
            <person name="McKenney K."/>
            <person name="Adams M.D."/>
            <person name="Loftus B.J."/>
            <person name="Peterson S.N."/>
            <person name="Reich C.I."/>
            <person name="McNeil L.K."/>
            <person name="Badger J.H."/>
            <person name="Glodek A."/>
            <person name="Zhou L."/>
            <person name="Overbeek R."/>
            <person name="Gocayne J.D."/>
            <person name="Weidman J.F."/>
            <person name="McDonald L.A."/>
            <person name="Utterback T.R."/>
            <person name="Cotton M.D."/>
            <person name="Spriggs T."/>
            <person name="Artiach P."/>
            <person name="Kaine B.P."/>
            <person name="Sykes S.M."/>
            <person name="Sadow P.W."/>
            <person name="D'Andrea K.P."/>
            <person name="Bowman C."/>
            <person name="Fujii C."/>
            <person name="Garland S.A."/>
            <person name="Mason T.M."/>
            <person name="Olsen G.J."/>
            <person name="Fraser C.M."/>
            <person name="Smith H.O."/>
            <person name="Woese C.R."/>
            <person name="Venter J.C."/>
        </authorList>
    </citation>
    <scope>NUCLEOTIDE SEQUENCE [LARGE SCALE GENOMIC DNA]</scope>
    <source>
        <strain>ATCC 49558 / DSM 4304 / JCM 9628 / NBRC 100126 / VC-16</strain>
    </source>
</reference>
<feature type="chain" id="PRO_0000141713" description="5-amino-6-(D-ribitylamino)uracil--L-tyrosine 4-hydroxyphenyl transferase">
    <location>
        <begin position="1"/>
        <end position="343"/>
    </location>
</feature>
<feature type="domain" description="Radical SAM core" evidence="2">
    <location>
        <begin position="39"/>
        <end position="268"/>
    </location>
</feature>
<feature type="binding site" evidence="1">
    <location>
        <position position="53"/>
    </location>
    <ligand>
        <name>[4Fe-4S] cluster</name>
        <dbReference type="ChEBI" id="CHEBI:49883"/>
        <note>4Fe-4S-S-AdoMet</note>
    </ligand>
</feature>
<feature type="binding site" evidence="1">
    <location>
        <position position="57"/>
    </location>
    <ligand>
        <name>[4Fe-4S] cluster</name>
        <dbReference type="ChEBI" id="CHEBI:49883"/>
        <note>4Fe-4S-S-AdoMet</note>
    </ligand>
</feature>
<feature type="binding site" evidence="1">
    <location>
        <position position="60"/>
    </location>
    <ligand>
        <name>[4Fe-4S] cluster</name>
        <dbReference type="ChEBI" id="CHEBI:49883"/>
        <note>4Fe-4S-S-AdoMet</note>
    </ligand>
</feature>
<protein>
    <recommendedName>
        <fullName evidence="1">5-amino-6-(D-ribitylamino)uracil--L-tyrosine 4-hydroxyphenyl transferase</fullName>
        <ecNumber evidence="1">2.5.1.147</ecNumber>
    </recommendedName>
    <alternativeName>
        <fullName evidence="1">FO synthase subunit 2</fullName>
    </alternativeName>
</protein>